<dbReference type="EC" id="2.7.7.27" evidence="1"/>
<dbReference type="EMBL" id="CP000948">
    <property type="protein sequence ID" value="ACB04487.1"/>
    <property type="molecule type" value="Genomic_DNA"/>
</dbReference>
<dbReference type="RefSeq" id="WP_000253975.1">
    <property type="nucleotide sequence ID" value="NC_010473.1"/>
</dbReference>
<dbReference type="SMR" id="B1X775"/>
<dbReference type="GeneID" id="93778559"/>
<dbReference type="KEGG" id="ecd:ECDH10B_3604"/>
<dbReference type="HOGENOM" id="CLU_029499_14_1_6"/>
<dbReference type="UniPathway" id="UPA00164"/>
<dbReference type="GO" id="GO:0005524">
    <property type="term" value="F:ATP binding"/>
    <property type="evidence" value="ECO:0007669"/>
    <property type="project" value="UniProtKB-KW"/>
</dbReference>
<dbReference type="GO" id="GO:0008878">
    <property type="term" value="F:glucose-1-phosphate adenylyltransferase activity"/>
    <property type="evidence" value="ECO:0007669"/>
    <property type="project" value="UniProtKB-UniRule"/>
</dbReference>
<dbReference type="GO" id="GO:0005978">
    <property type="term" value="P:glycogen biosynthetic process"/>
    <property type="evidence" value="ECO:0007669"/>
    <property type="project" value="UniProtKB-UniRule"/>
</dbReference>
<dbReference type="CDD" id="cd02508">
    <property type="entry name" value="ADP_Glucose_PP"/>
    <property type="match status" value="1"/>
</dbReference>
<dbReference type="CDD" id="cd04651">
    <property type="entry name" value="LbH_G1P_AT_C"/>
    <property type="match status" value="1"/>
</dbReference>
<dbReference type="FunFam" id="2.160.10.10:FF:000006">
    <property type="entry name" value="Glucose-1-phosphate adenylyltransferase"/>
    <property type="match status" value="1"/>
</dbReference>
<dbReference type="FunFam" id="3.90.550.10:FF:000014">
    <property type="entry name" value="Glucose-1-phosphate adenylyltransferase"/>
    <property type="match status" value="1"/>
</dbReference>
<dbReference type="Gene3D" id="2.160.10.10">
    <property type="entry name" value="Hexapeptide repeat proteins"/>
    <property type="match status" value="1"/>
</dbReference>
<dbReference type="Gene3D" id="3.90.550.10">
    <property type="entry name" value="Spore Coat Polysaccharide Biosynthesis Protein SpsA, Chain A"/>
    <property type="match status" value="1"/>
</dbReference>
<dbReference type="HAMAP" id="MF_00624">
    <property type="entry name" value="GlgC"/>
    <property type="match status" value="1"/>
</dbReference>
<dbReference type="InterPro" id="IPR011831">
    <property type="entry name" value="ADP-Glc_PPase"/>
</dbReference>
<dbReference type="InterPro" id="IPR005836">
    <property type="entry name" value="ADP_Glu_pyroP_CS"/>
</dbReference>
<dbReference type="InterPro" id="IPR023049">
    <property type="entry name" value="GlgC_bac"/>
</dbReference>
<dbReference type="InterPro" id="IPR056818">
    <property type="entry name" value="GlmU/GlgC-like_hexapep"/>
</dbReference>
<dbReference type="InterPro" id="IPR005835">
    <property type="entry name" value="NTP_transferase_dom"/>
</dbReference>
<dbReference type="InterPro" id="IPR029044">
    <property type="entry name" value="Nucleotide-diphossugar_trans"/>
</dbReference>
<dbReference type="InterPro" id="IPR011004">
    <property type="entry name" value="Trimer_LpxA-like_sf"/>
</dbReference>
<dbReference type="NCBIfam" id="TIGR02091">
    <property type="entry name" value="glgC"/>
    <property type="match status" value="1"/>
</dbReference>
<dbReference type="NCBIfam" id="NF001947">
    <property type="entry name" value="PRK00725.1"/>
    <property type="match status" value="1"/>
</dbReference>
<dbReference type="NCBIfam" id="NF002023">
    <property type="entry name" value="PRK00844.1"/>
    <property type="match status" value="1"/>
</dbReference>
<dbReference type="PANTHER" id="PTHR43523:SF2">
    <property type="entry name" value="GLUCOSE-1-PHOSPHATE ADENYLYLTRANSFERASE"/>
    <property type="match status" value="1"/>
</dbReference>
<dbReference type="PANTHER" id="PTHR43523">
    <property type="entry name" value="GLUCOSE-1-PHOSPHATE ADENYLYLTRANSFERASE-RELATED"/>
    <property type="match status" value="1"/>
</dbReference>
<dbReference type="Pfam" id="PF24894">
    <property type="entry name" value="Hexapep_GlmU"/>
    <property type="match status" value="1"/>
</dbReference>
<dbReference type="Pfam" id="PF00483">
    <property type="entry name" value="NTP_transferase"/>
    <property type="match status" value="1"/>
</dbReference>
<dbReference type="SUPFAM" id="SSF53448">
    <property type="entry name" value="Nucleotide-diphospho-sugar transferases"/>
    <property type="match status" value="1"/>
</dbReference>
<dbReference type="SUPFAM" id="SSF51161">
    <property type="entry name" value="Trimeric LpxA-like enzymes"/>
    <property type="match status" value="1"/>
</dbReference>
<dbReference type="PROSITE" id="PS00808">
    <property type="entry name" value="ADP_GLC_PYROPHOSPH_1"/>
    <property type="match status" value="1"/>
</dbReference>
<dbReference type="PROSITE" id="PS00809">
    <property type="entry name" value="ADP_GLC_PYROPHOSPH_2"/>
    <property type="match status" value="1"/>
</dbReference>
<dbReference type="PROSITE" id="PS00810">
    <property type="entry name" value="ADP_GLC_PYROPHOSPH_3"/>
    <property type="match status" value="1"/>
</dbReference>
<protein>
    <recommendedName>
        <fullName evidence="1">Glucose-1-phosphate adenylyltransferase</fullName>
        <ecNumber evidence="1">2.7.7.27</ecNumber>
    </recommendedName>
    <alternativeName>
        <fullName evidence="1">ADP-glucose pyrophosphorylase</fullName>
        <shortName evidence="1">ADPGlc PPase</shortName>
    </alternativeName>
    <alternativeName>
        <fullName evidence="1">ADP-glucose synthase</fullName>
    </alternativeName>
</protein>
<proteinExistence type="inferred from homology"/>
<organism>
    <name type="scientific">Escherichia coli (strain K12 / DH10B)</name>
    <dbReference type="NCBI Taxonomy" id="316385"/>
    <lineage>
        <taxon>Bacteria</taxon>
        <taxon>Pseudomonadati</taxon>
        <taxon>Pseudomonadota</taxon>
        <taxon>Gammaproteobacteria</taxon>
        <taxon>Enterobacterales</taxon>
        <taxon>Enterobacteriaceae</taxon>
        <taxon>Escherichia</taxon>
    </lineage>
</organism>
<gene>
    <name evidence="1" type="primary">glgC</name>
    <name type="ordered locus">ECDH10B_3604</name>
</gene>
<comment type="function">
    <text evidence="1">Involved in the biosynthesis of ADP-glucose, a building block required for the elongation reactions to produce glycogen. Catalyzes the reaction between ATP and alpha-D-glucose 1-phosphate (G1P) to produce pyrophosphate and ADP-Glc.</text>
</comment>
<comment type="catalytic activity">
    <reaction evidence="1">
        <text>alpha-D-glucose 1-phosphate + ATP + H(+) = ADP-alpha-D-glucose + diphosphate</text>
        <dbReference type="Rhea" id="RHEA:12120"/>
        <dbReference type="ChEBI" id="CHEBI:15378"/>
        <dbReference type="ChEBI" id="CHEBI:30616"/>
        <dbReference type="ChEBI" id="CHEBI:33019"/>
        <dbReference type="ChEBI" id="CHEBI:57498"/>
        <dbReference type="ChEBI" id="CHEBI:58601"/>
        <dbReference type="EC" id="2.7.7.27"/>
    </reaction>
</comment>
<comment type="activity regulation">
    <text evidence="1">Allosterically activated by fructose-1,6-bisphosphate (F16BP) and inhibited by AMP.</text>
</comment>
<comment type="pathway">
    <text evidence="1">Glycan biosynthesis; glycogen biosynthesis.</text>
</comment>
<comment type="subunit">
    <text evidence="1">Homotetramer.</text>
</comment>
<comment type="similarity">
    <text evidence="1">Belongs to the bacterial/plant glucose-1-phosphate adenylyltransferase family.</text>
</comment>
<keyword id="KW-0021">Allosteric enzyme</keyword>
<keyword id="KW-0067">ATP-binding</keyword>
<keyword id="KW-0119">Carbohydrate metabolism</keyword>
<keyword id="KW-0320">Glycogen biosynthesis</keyword>
<keyword id="KW-0321">Glycogen metabolism</keyword>
<keyword id="KW-0547">Nucleotide-binding</keyword>
<keyword id="KW-0548">Nucleotidyltransferase</keyword>
<keyword id="KW-0808">Transferase</keyword>
<evidence type="ECO:0000255" key="1">
    <source>
        <dbReference type="HAMAP-Rule" id="MF_00624"/>
    </source>
</evidence>
<feature type="chain" id="PRO_1000130479" description="Glucose-1-phosphate adenylyltransferase">
    <location>
        <begin position="1"/>
        <end position="431"/>
    </location>
</feature>
<feature type="binding site" evidence="1">
    <location>
        <position position="39"/>
    </location>
    <ligand>
        <name>beta-D-fructose 1,6-bisphosphate</name>
        <dbReference type="ChEBI" id="CHEBI:32966"/>
    </ligand>
</feature>
<feature type="binding site" evidence="1">
    <location>
        <position position="40"/>
    </location>
    <ligand>
        <name>AMP</name>
        <dbReference type="ChEBI" id="CHEBI:456215"/>
    </ligand>
</feature>
<feature type="binding site" evidence="1">
    <location>
        <position position="46"/>
    </location>
    <ligand>
        <name>AMP</name>
        <dbReference type="ChEBI" id="CHEBI:456215"/>
    </ligand>
</feature>
<feature type="binding site" evidence="1">
    <location>
        <position position="52"/>
    </location>
    <ligand>
        <name>AMP</name>
        <dbReference type="ChEBI" id="CHEBI:456215"/>
    </ligand>
</feature>
<feature type="binding site" evidence="1">
    <location>
        <position position="114"/>
    </location>
    <ligand>
        <name>alpha-D-glucose 1-phosphate</name>
        <dbReference type="ChEBI" id="CHEBI:58601"/>
    </ligand>
</feature>
<feature type="binding site" evidence="1">
    <location>
        <position position="130"/>
    </location>
    <ligand>
        <name>AMP</name>
        <dbReference type="ChEBI" id="CHEBI:456215"/>
    </ligand>
</feature>
<feature type="binding site" evidence="1">
    <location>
        <position position="179"/>
    </location>
    <ligand>
        <name>alpha-D-glucose 1-phosphate</name>
        <dbReference type="ChEBI" id="CHEBI:58601"/>
    </ligand>
</feature>
<feature type="binding site" evidence="1">
    <location>
        <begin position="194"/>
        <end position="195"/>
    </location>
    <ligand>
        <name>alpha-D-glucose 1-phosphate</name>
        <dbReference type="ChEBI" id="CHEBI:58601"/>
    </ligand>
</feature>
<feature type="binding site" evidence="1">
    <location>
        <position position="212"/>
    </location>
    <ligand>
        <name>alpha-D-glucose 1-phosphate</name>
        <dbReference type="ChEBI" id="CHEBI:58601"/>
    </ligand>
</feature>
<feature type="binding site" evidence="1">
    <location>
        <position position="370"/>
    </location>
    <ligand>
        <name>AMP</name>
        <dbReference type="ChEBI" id="CHEBI:456215"/>
    </ligand>
</feature>
<feature type="binding site" evidence="1">
    <location>
        <position position="386"/>
    </location>
    <ligand>
        <name>AMP</name>
        <dbReference type="ChEBI" id="CHEBI:456215"/>
    </ligand>
</feature>
<feature type="binding site" evidence="1">
    <location>
        <begin position="419"/>
        <end position="423"/>
    </location>
    <ligand>
        <name>beta-D-fructose 1,6-bisphosphate</name>
        <dbReference type="ChEBI" id="CHEBI:32966"/>
    </ligand>
</feature>
<feature type="binding site" evidence="1">
    <location>
        <begin position="429"/>
        <end position="431"/>
    </location>
    <ligand>
        <name>beta-D-fructose 1,6-bisphosphate</name>
        <dbReference type="ChEBI" id="CHEBI:32966"/>
    </ligand>
</feature>
<feature type="site" description="Could play a key role in the communication between the regulatory and the substrate sites" evidence="1">
    <location>
        <position position="74"/>
    </location>
</feature>
<feature type="site" description="Could play a key role in the communication between the regulatory and the substrate sites" evidence="1">
    <location>
        <position position="113"/>
    </location>
</feature>
<reference key="1">
    <citation type="journal article" date="2008" name="J. Bacteriol.">
        <title>The complete genome sequence of Escherichia coli DH10B: insights into the biology of a laboratory workhorse.</title>
        <authorList>
            <person name="Durfee T."/>
            <person name="Nelson R."/>
            <person name="Baldwin S."/>
            <person name="Plunkett G. III"/>
            <person name="Burland V."/>
            <person name="Mau B."/>
            <person name="Petrosino J.F."/>
            <person name="Qin X."/>
            <person name="Muzny D.M."/>
            <person name="Ayele M."/>
            <person name="Gibbs R.A."/>
            <person name="Csorgo B."/>
            <person name="Posfai G."/>
            <person name="Weinstock G.M."/>
            <person name="Blattner F.R."/>
        </authorList>
    </citation>
    <scope>NUCLEOTIDE SEQUENCE [LARGE SCALE GENOMIC DNA]</scope>
    <source>
        <strain>K12 / DH10B</strain>
    </source>
</reference>
<sequence length="431" mass="48698">MVSLEKNDHLMLARQLPLKSVALILAGGRGTRLKDLTNKRAKPAVHFGGKFRIIDFALSNCINSGIRRMGVITQYQSHTLVQHIQRGWSFFNEEMNEFVDLLPAQQRMKGENWYRGTADAVTQNLDIIRRYKAEYVVILAGDHIYKQDYSRMLIDHVEKGARCTVACMPVPIEEASAFGVMAVDENDKIIEFVEKPANPPSMPNDPSKSLASMGIYVFDADYLYELLEEDDRDENSSHDFGKDLIPKITEAGLAYAHPFPLSCVQSDPDAEPYWRDVGTLEAYWKANLDLASVVPELDMYDRNWPIRTYNESLPPAKFVQDRSGSHGMTLNSLVSGGCVISGSVVVQSVLFSRVRVNSFCNIDSAVLLPEVWVGRSCRLRRCVIDRACVIPEGMVIGENAEEDARRFYRSEEGIVLVTREMLRKLGHKQER</sequence>
<accession>B1X775</accession>
<name>GLGC_ECODH</name>